<feature type="chain" id="PRO_0000386870" description="Ribosomal RNA small subunit methyltransferase H">
    <location>
        <begin position="1"/>
        <end position="313"/>
    </location>
</feature>
<feature type="binding site" evidence="1">
    <location>
        <begin position="35"/>
        <end position="37"/>
    </location>
    <ligand>
        <name>S-adenosyl-L-methionine</name>
        <dbReference type="ChEBI" id="CHEBI:59789"/>
    </ligand>
</feature>
<feature type="binding site" evidence="1">
    <location>
        <position position="55"/>
    </location>
    <ligand>
        <name>S-adenosyl-L-methionine</name>
        <dbReference type="ChEBI" id="CHEBI:59789"/>
    </ligand>
</feature>
<feature type="binding site" evidence="1">
    <location>
        <position position="79"/>
    </location>
    <ligand>
        <name>S-adenosyl-L-methionine</name>
        <dbReference type="ChEBI" id="CHEBI:59789"/>
    </ligand>
</feature>
<feature type="binding site" evidence="1">
    <location>
        <position position="101"/>
    </location>
    <ligand>
        <name>S-adenosyl-L-methionine</name>
        <dbReference type="ChEBI" id="CHEBI:59789"/>
    </ligand>
</feature>
<feature type="binding site" evidence="1">
    <location>
        <position position="108"/>
    </location>
    <ligand>
        <name>S-adenosyl-L-methionine</name>
        <dbReference type="ChEBI" id="CHEBI:59789"/>
    </ligand>
</feature>
<gene>
    <name evidence="1" type="primary">rsmH</name>
    <name type="synonym">mraW</name>
    <name type="ordered locus">ECB_00083</name>
</gene>
<comment type="function">
    <text evidence="1">Specifically methylates the N4 position of cytidine in position 1402 (C1402) of 16S rRNA.</text>
</comment>
<comment type="catalytic activity">
    <reaction evidence="1">
        <text>cytidine(1402) in 16S rRNA + S-adenosyl-L-methionine = N(4)-methylcytidine(1402) in 16S rRNA + S-adenosyl-L-homocysteine + H(+)</text>
        <dbReference type="Rhea" id="RHEA:42928"/>
        <dbReference type="Rhea" id="RHEA-COMP:10286"/>
        <dbReference type="Rhea" id="RHEA-COMP:10287"/>
        <dbReference type="ChEBI" id="CHEBI:15378"/>
        <dbReference type="ChEBI" id="CHEBI:57856"/>
        <dbReference type="ChEBI" id="CHEBI:59789"/>
        <dbReference type="ChEBI" id="CHEBI:74506"/>
        <dbReference type="ChEBI" id="CHEBI:82748"/>
        <dbReference type="EC" id="2.1.1.199"/>
    </reaction>
</comment>
<comment type="subcellular location">
    <subcellularLocation>
        <location evidence="1">Cytoplasm</location>
    </subcellularLocation>
</comment>
<comment type="similarity">
    <text evidence="1">Belongs to the methyltransferase superfamily. RsmH family.</text>
</comment>
<organism>
    <name type="scientific">Escherichia coli (strain B / REL606)</name>
    <dbReference type="NCBI Taxonomy" id="413997"/>
    <lineage>
        <taxon>Bacteria</taxon>
        <taxon>Pseudomonadati</taxon>
        <taxon>Pseudomonadota</taxon>
        <taxon>Gammaproteobacteria</taxon>
        <taxon>Enterobacterales</taxon>
        <taxon>Enterobacteriaceae</taxon>
        <taxon>Escherichia</taxon>
    </lineage>
</organism>
<protein>
    <recommendedName>
        <fullName evidence="1">Ribosomal RNA small subunit methyltransferase H</fullName>
        <ecNumber evidence="1">2.1.1.199</ecNumber>
    </recommendedName>
    <alternativeName>
        <fullName evidence="1">16S rRNA m(4)C1402 methyltransferase</fullName>
    </alternativeName>
    <alternativeName>
        <fullName evidence="1">rRNA (cytosine-N(4)-)-methyltransferase RsmH</fullName>
    </alternativeName>
</protein>
<proteinExistence type="inferred from homology"/>
<sequence>MMENYKHTTVLLDEAVNGLNIRPDGIYIDGTFGRGGHSRLILSQLGEEGRLLAIDRDPQAIAVAKTIDDPRFSIIHGPFSALGEYVAERDLIGKIDGILLDLGVSSPQLDDAERGFSFMRDGPLDMRMDPTRGQSAAEWLQTAEEADIAWVLKTYGEERFAKRIARAIVERNREQPMTRTKELAEVVAAATPVKDKFKHPATRTFQAVRIWVNSELEEIEQALKSSLNVLAPGGRLSIISFHSLEDRIVKRFMRENSRGPQVPAGLPMTEEQLKKLGGRQLRALGKLMPGEEEVAENPRARSSVLRIAERTNA</sequence>
<evidence type="ECO:0000255" key="1">
    <source>
        <dbReference type="HAMAP-Rule" id="MF_01007"/>
    </source>
</evidence>
<accession>C6UM45</accession>
<reference key="1">
    <citation type="journal article" date="2009" name="J. Mol. Biol.">
        <title>Genome sequences of Escherichia coli B strains REL606 and BL21(DE3).</title>
        <authorList>
            <person name="Jeong H."/>
            <person name="Barbe V."/>
            <person name="Lee C.H."/>
            <person name="Vallenet D."/>
            <person name="Yu D.S."/>
            <person name="Choi S.H."/>
            <person name="Couloux A."/>
            <person name="Lee S.W."/>
            <person name="Yoon S.H."/>
            <person name="Cattolico L."/>
            <person name="Hur C.G."/>
            <person name="Park H.S."/>
            <person name="Segurens B."/>
            <person name="Kim S.C."/>
            <person name="Oh T.K."/>
            <person name="Lenski R.E."/>
            <person name="Studier F.W."/>
            <person name="Daegelen P."/>
            <person name="Kim J.F."/>
        </authorList>
    </citation>
    <scope>NUCLEOTIDE SEQUENCE [LARGE SCALE GENOMIC DNA]</scope>
    <source>
        <strain>B / REL606</strain>
    </source>
</reference>
<name>RSMH_ECOBR</name>
<dbReference type="EC" id="2.1.1.199" evidence="1"/>
<dbReference type="EMBL" id="CP000819">
    <property type="protein sequence ID" value="ACT37776.1"/>
    <property type="molecule type" value="Genomic_DNA"/>
</dbReference>
<dbReference type="RefSeq" id="WP_000970479.1">
    <property type="nucleotide sequence ID" value="NC_012967.1"/>
</dbReference>
<dbReference type="SMR" id="C6UM45"/>
<dbReference type="GeneID" id="86862592"/>
<dbReference type="KEGG" id="ebr:ECB_00083"/>
<dbReference type="HOGENOM" id="CLU_038422_2_0_6"/>
<dbReference type="BioCyc" id="ECOL413997:GCQD-261-MONOMER"/>
<dbReference type="GO" id="GO:0005737">
    <property type="term" value="C:cytoplasm"/>
    <property type="evidence" value="ECO:0007669"/>
    <property type="project" value="UniProtKB-SubCell"/>
</dbReference>
<dbReference type="GO" id="GO:0071424">
    <property type="term" value="F:rRNA (cytosine-N4-)-methyltransferase activity"/>
    <property type="evidence" value="ECO:0007669"/>
    <property type="project" value="UniProtKB-UniRule"/>
</dbReference>
<dbReference type="GO" id="GO:0070475">
    <property type="term" value="P:rRNA base methylation"/>
    <property type="evidence" value="ECO:0007669"/>
    <property type="project" value="UniProtKB-UniRule"/>
</dbReference>
<dbReference type="FunFam" id="1.10.150.170:FF:000001">
    <property type="entry name" value="Ribosomal RNA small subunit methyltransferase H"/>
    <property type="match status" value="1"/>
</dbReference>
<dbReference type="Gene3D" id="1.10.150.170">
    <property type="entry name" value="Putative methyltransferase TM0872, insert domain"/>
    <property type="match status" value="1"/>
</dbReference>
<dbReference type="Gene3D" id="3.40.50.150">
    <property type="entry name" value="Vaccinia Virus protein VP39"/>
    <property type="match status" value="1"/>
</dbReference>
<dbReference type="HAMAP" id="MF_01007">
    <property type="entry name" value="16SrRNA_methyltr_H"/>
    <property type="match status" value="1"/>
</dbReference>
<dbReference type="InterPro" id="IPR002903">
    <property type="entry name" value="RsmH"/>
</dbReference>
<dbReference type="InterPro" id="IPR023397">
    <property type="entry name" value="SAM-dep_MeTrfase_MraW_recog"/>
</dbReference>
<dbReference type="InterPro" id="IPR029063">
    <property type="entry name" value="SAM-dependent_MTases_sf"/>
</dbReference>
<dbReference type="NCBIfam" id="TIGR00006">
    <property type="entry name" value="16S rRNA (cytosine(1402)-N(4))-methyltransferase RsmH"/>
    <property type="match status" value="1"/>
</dbReference>
<dbReference type="PANTHER" id="PTHR11265:SF0">
    <property type="entry name" value="12S RRNA N4-METHYLCYTIDINE METHYLTRANSFERASE"/>
    <property type="match status" value="1"/>
</dbReference>
<dbReference type="PANTHER" id="PTHR11265">
    <property type="entry name" value="S-ADENOSYL-METHYLTRANSFERASE MRAW"/>
    <property type="match status" value="1"/>
</dbReference>
<dbReference type="Pfam" id="PF01795">
    <property type="entry name" value="Methyltransf_5"/>
    <property type="match status" value="1"/>
</dbReference>
<dbReference type="PIRSF" id="PIRSF004486">
    <property type="entry name" value="MraW"/>
    <property type="match status" value="1"/>
</dbReference>
<dbReference type="SUPFAM" id="SSF81799">
    <property type="entry name" value="Putative methyltransferase TM0872, insert domain"/>
    <property type="match status" value="1"/>
</dbReference>
<dbReference type="SUPFAM" id="SSF53335">
    <property type="entry name" value="S-adenosyl-L-methionine-dependent methyltransferases"/>
    <property type="match status" value="1"/>
</dbReference>
<keyword id="KW-0963">Cytoplasm</keyword>
<keyword id="KW-0489">Methyltransferase</keyword>
<keyword id="KW-0698">rRNA processing</keyword>
<keyword id="KW-0949">S-adenosyl-L-methionine</keyword>
<keyword id="KW-0808">Transferase</keyword>